<feature type="chain" id="PRO_0000030117" description="S-adenosylmethionine decarboxylase beta chain" evidence="1">
    <location>
        <begin position="1"/>
        <end position="60"/>
    </location>
</feature>
<feature type="chain" id="PRO_0000030118" description="S-adenosylmethionine decarboxylase alpha chain" evidence="1">
    <location>
        <begin position="61"/>
        <end position="125"/>
    </location>
</feature>
<feature type="active site" description="Schiff-base intermediate with substrate; via pyruvic acid" evidence="1">
    <location>
        <position position="61"/>
    </location>
</feature>
<feature type="active site" description="Proton acceptor; for processing activity" evidence="1">
    <location>
        <position position="66"/>
    </location>
</feature>
<feature type="active site" description="Proton donor; for catalytic activity" evidence="1">
    <location>
        <position position="81"/>
    </location>
</feature>
<feature type="site" description="Cleavage (non-hydrolytic); by autolysis" evidence="1">
    <location>
        <begin position="60"/>
        <end position="61"/>
    </location>
</feature>
<feature type="modified residue" description="Pyruvic acid (Ser); by autocatalysis" evidence="1">
    <location>
        <position position="61"/>
    </location>
</feature>
<dbReference type="EC" id="4.1.1.50" evidence="1"/>
<dbReference type="EMBL" id="BX548175">
    <property type="protein sequence ID" value="CAE21891.1"/>
    <property type="status" value="ALT_INIT"/>
    <property type="molecule type" value="Genomic_DNA"/>
</dbReference>
<dbReference type="SMR" id="Q7V558"/>
<dbReference type="KEGG" id="pmt:PMT_1716"/>
<dbReference type="eggNOG" id="COG1586">
    <property type="taxonomic scope" value="Bacteria"/>
</dbReference>
<dbReference type="HOGENOM" id="CLU_125470_2_0_3"/>
<dbReference type="OrthoDB" id="9793120at2"/>
<dbReference type="UniPathway" id="UPA00331">
    <property type="reaction ID" value="UER00451"/>
</dbReference>
<dbReference type="Proteomes" id="UP000001423">
    <property type="component" value="Chromosome"/>
</dbReference>
<dbReference type="GO" id="GO:0005829">
    <property type="term" value="C:cytosol"/>
    <property type="evidence" value="ECO:0007669"/>
    <property type="project" value="TreeGrafter"/>
</dbReference>
<dbReference type="GO" id="GO:0004014">
    <property type="term" value="F:adenosylmethionine decarboxylase activity"/>
    <property type="evidence" value="ECO:0007669"/>
    <property type="project" value="UniProtKB-UniRule"/>
</dbReference>
<dbReference type="GO" id="GO:0008295">
    <property type="term" value="P:spermidine biosynthetic process"/>
    <property type="evidence" value="ECO:0007669"/>
    <property type="project" value="UniProtKB-UniRule"/>
</dbReference>
<dbReference type="Gene3D" id="3.30.160.750">
    <property type="match status" value="1"/>
</dbReference>
<dbReference type="Gene3D" id="3.30.360.110">
    <property type="entry name" value="S-adenosylmethionine decarboxylase domain"/>
    <property type="match status" value="1"/>
</dbReference>
<dbReference type="HAMAP" id="MF_00464">
    <property type="entry name" value="AdoMetDC_1"/>
    <property type="match status" value="1"/>
</dbReference>
<dbReference type="InterPro" id="IPR042286">
    <property type="entry name" value="AdoMetDC_C"/>
</dbReference>
<dbReference type="InterPro" id="IPR003826">
    <property type="entry name" value="AdoMetDC_fam_prok"/>
</dbReference>
<dbReference type="InterPro" id="IPR042284">
    <property type="entry name" value="AdoMetDC_N"/>
</dbReference>
<dbReference type="InterPro" id="IPR016067">
    <property type="entry name" value="S-AdoMet_deCO2ase_core"/>
</dbReference>
<dbReference type="InterPro" id="IPR017716">
    <property type="entry name" value="S-AdoMet_deCOase_pro-enz"/>
</dbReference>
<dbReference type="NCBIfam" id="TIGR03330">
    <property type="entry name" value="SAM_DCase_Bsu"/>
    <property type="match status" value="1"/>
</dbReference>
<dbReference type="PANTHER" id="PTHR33866">
    <property type="entry name" value="S-ADENOSYLMETHIONINE DECARBOXYLASE PROENZYME"/>
    <property type="match status" value="1"/>
</dbReference>
<dbReference type="PANTHER" id="PTHR33866:SF2">
    <property type="entry name" value="S-ADENOSYLMETHIONINE DECARBOXYLASE PROENZYME"/>
    <property type="match status" value="1"/>
</dbReference>
<dbReference type="Pfam" id="PF02675">
    <property type="entry name" value="AdoMet_dc"/>
    <property type="match status" value="1"/>
</dbReference>
<dbReference type="SUPFAM" id="SSF56276">
    <property type="entry name" value="S-adenosylmethionine decarboxylase"/>
    <property type="match status" value="1"/>
</dbReference>
<organism>
    <name type="scientific">Prochlorococcus marinus (strain MIT 9313)</name>
    <dbReference type="NCBI Taxonomy" id="74547"/>
    <lineage>
        <taxon>Bacteria</taxon>
        <taxon>Bacillati</taxon>
        <taxon>Cyanobacteriota</taxon>
        <taxon>Cyanophyceae</taxon>
        <taxon>Synechococcales</taxon>
        <taxon>Prochlorococcaceae</taxon>
        <taxon>Prochlorococcus</taxon>
    </lineage>
</organism>
<protein>
    <recommendedName>
        <fullName evidence="1">S-adenosylmethionine decarboxylase proenzyme</fullName>
        <shortName evidence="1">AdoMetDC</shortName>
        <shortName evidence="1">SAMDC</shortName>
        <ecNumber evidence="1">4.1.1.50</ecNumber>
    </recommendedName>
    <component>
        <recommendedName>
            <fullName evidence="1">S-adenosylmethionine decarboxylase beta chain</fullName>
        </recommendedName>
    </component>
    <component>
        <recommendedName>
            <fullName evidence="1">S-adenosylmethionine decarboxylase alpha chain</fullName>
        </recommendedName>
    </component>
</protein>
<gene>
    <name evidence="1" type="primary">speH</name>
    <name type="ordered locus">PMT_1716</name>
</gene>
<comment type="function">
    <text evidence="1">Catalyzes the decarboxylation of S-adenosylmethionine to S-adenosylmethioninamine (dcAdoMet), the propylamine donor required for the synthesis of the polyamines spermine and spermidine from the diamine putrescine.</text>
</comment>
<comment type="catalytic activity">
    <reaction evidence="1">
        <text>S-adenosyl-L-methionine + H(+) = S-adenosyl 3-(methylsulfanyl)propylamine + CO2</text>
        <dbReference type="Rhea" id="RHEA:15981"/>
        <dbReference type="ChEBI" id="CHEBI:15378"/>
        <dbReference type="ChEBI" id="CHEBI:16526"/>
        <dbReference type="ChEBI" id="CHEBI:57443"/>
        <dbReference type="ChEBI" id="CHEBI:59789"/>
        <dbReference type="EC" id="4.1.1.50"/>
    </reaction>
</comment>
<comment type="cofactor">
    <cofactor evidence="1">
        <name>pyruvate</name>
        <dbReference type="ChEBI" id="CHEBI:15361"/>
    </cofactor>
    <text evidence="1">Binds 1 pyruvoyl group covalently per subunit.</text>
</comment>
<comment type="pathway">
    <text evidence="1">Amine and polyamine biosynthesis; S-adenosylmethioninamine biosynthesis; S-adenosylmethioninamine from S-adenosyl-L-methionine: step 1/1.</text>
</comment>
<comment type="subunit">
    <text evidence="1">Heterotetramer of two alpha and two beta chains arranged as a dimer of alpha/beta heterodimers.</text>
</comment>
<comment type="PTM">
    <text evidence="1">Is synthesized initially as an inactive proenzyme. Formation of the active enzyme involves a self-maturation process in which the active site pyruvoyl group is generated from an internal serine residue via an autocatalytic post-translational modification. Two non-identical subunits are generated from the proenzyme in this reaction, and the pyruvate is formed at the N-terminus of the alpha chain, which is derived from the carboxyl end of the proenzyme. The post-translation cleavage follows an unusual pathway, termed non-hydrolytic serinolysis, in which the side chain hydroxyl group of the serine supplies its oxygen atom to form the C-terminus of the beta chain, while the remainder of the serine residue undergoes an oxidative deamination to produce ammonia and the pyruvoyl group blocking the N-terminus of the alpha chain.</text>
</comment>
<comment type="similarity">
    <text evidence="1">Belongs to the prokaryotic AdoMetDC family. Type 1 subfamily.</text>
</comment>
<comment type="sequence caution" evidence="2">
    <conflict type="erroneous initiation">
        <sequence resource="EMBL-CDS" id="CAE21891"/>
    </conflict>
</comment>
<name>SPEH_PROMM</name>
<evidence type="ECO:0000255" key="1">
    <source>
        <dbReference type="HAMAP-Rule" id="MF_00464"/>
    </source>
</evidence>
<evidence type="ECO:0000305" key="2"/>
<sequence length="125" mass="13693">MVGKHCILELYDCDHAKLNDEAFLRTTITTAAKRAGATLLNLITHRFEPQGVTGLALLAESHLSIHTWPENGYAAVDVFTCGDQTMPEQACELLRQELGAKNHALKSFQRETPAALATAVRHPKA</sequence>
<reference key="1">
    <citation type="journal article" date="2003" name="Nature">
        <title>Genome divergence in two Prochlorococcus ecotypes reflects oceanic niche differentiation.</title>
        <authorList>
            <person name="Rocap G."/>
            <person name="Larimer F.W."/>
            <person name="Lamerdin J.E."/>
            <person name="Malfatti S."/>
            <person name="Chain P."/>
            <person name="Ahlgren N.A."/>
            <person name="Arellano A."/>
            <person name="Coleman M."/>
            <person name="Hauser L."/>
            <person name="Hess W.R."/>
            <person name="Johnson Z.I."/>
            <person name="Land M.L."/>
            <person name="Lindell D."/>
            <person name="Post A.F."/>
            <person name="Regala W."/>
            <person name="Shah M."/>
            <person name="Shaw S.L."/>
            <person name="Steglich C."/>
            <person name="Sullivan M.B."/>
            <person name="Ting C.S."/>
            <person name="Tolonen A."/>
            <person name="Webb E.A."/>
            <person name="Zinser E.R."/>
            <person name="Chisholm S.W."/>
        </authorList>
    </citation>
    <scope>NUCLEOTIDE SEQUENCE [LARGE SCALE GENOMIC DNA]</scope>
    <source>
        <strain>MIT 9313</strain>
    </source>
</reference>
<keyword id="KW-0068">Autocatalytic cleavage</keyword>
<keyword id="KW-0210">Decarboxylase</keyword>
<keyword id="KW-0456">Lyase</keyword>
<keyword id="KW-0620">Polyamine biosynthesis</keyword>
<keyword id="KW-0670">Pyruvate</keyword>
<keyword id="KW-1185">Reference proteome</keyword>
<keyword id="KW-0949">S-adenosyl-L-methionine</keyword>
<keyword id="KW-0704">Schiff base</keyword>
<keyword id="KW-0745">Spermidine biosynthesis</keyword>
<keyword id="KW-0865">Zymogen</keyword>
<proteinExistence type="inferred from homology"/>
<accession>Q7V558</accession>